<dbReference type="EMBL" id="U32438">
    <property type="protein sequence ID" value="AAC52375.1"/>
    <property type="molecule type" value="mRNA"/>
</dbReference>
<dbReference type="SMR" id="P49807"/>
<dbReference type="FunCoup" id="P49807">
    <property type="interactions" value="16"/>
</dbReference>
<dbReference type="PhosphoSitePlus" id="P49807"/>
<dbReference type="PaxDb" id="10116-ENSRNOP00000027763"/>
<dbReference type="UCSC" id="RGD:3563">
    <property type="organism name" value="rat"/>
</dbReference>
<dbReference type="AGR" id="RGD:3563"/>
<dbReference type="RGD" id="3563">
    <property type="gene designation" value="Rgs11"/>
</dbReference>
<dbReference type="eggNOG" id="KOG3589">
    <property type="taxonomic scope" value="Eukaryota"/>
</dbReference>
<dbReference type="InParanoid" id="P49807"/>
<dbReference type="PhylomeDB" id="P49807"/>
<dbReference type="Proteomes" id="UP000002494">
    <property type="component" value="Unplaced"/>
</dbReference>
<dbReference type="GO" id="GO:0051286">
    <property type="term" value="C:cell tip"/>
    <property type="evidence" value="ECO:0000266"/>
    <property type="project" value="RGD"/>
</dbReference>
<dbReference type="GO" id="GO:0030425">
    <property type="term" value="C:dendrite"/>
    <property type="evidence" value="ECO:0000266"/>
    <property type="project" value="RGD"/>
</dbReference>
<dbReference type="GO" id="GO:0044292">
    <property type="term" value="C:dendrite terminus"/>
    <property type="evidence" value="ECO:0000266"/>
    <property type="project" value="RGD"/>
</dbReference>
<dbReference type="GO" id="GO:0032991">
    <property type="term" value="C:protein-containing complex"/>
    <property type="evidence" value="ECO:0000266"/>
    <property type="project" value="RGD"/>
</dbReference>
<dbReference type="GO" id="GO:0031681">
    <property type="term" value="F:G-protein beta-subunit binding"/>
    <property type="evidence" value="ECO:0000266"/>
    <property type="project" value="RGD"/>
</dbReference>
<dbReference type="GO" id="GO:0005096">
    <property type="term" value="F:GTPase activator activity"/>
    <property type="evidence" value="ECO:0000304"/>
    <property type="project" value="RGD"/>
</dbReference>
<dbReference type="GO" id="GO:0009968">
    <property type="term" value="P:negative regulation of signal transduction"/>
    <property type="evidence" value="ECO:0007669"/>
    <property type="project" value="UniProtKB-KW"/>
</dbReference>
<dbReference type="GO" id="GO:0008277">
    <property type="term" value="P:regulation of G protein-coupled receptor signaling pathway"/>
    <property type="evidence" value="ECO:0000304"/>
    <property type="project" value="RGD"/>
</dbReference>
<dbReference type="Gene3D" id="1.10.167.10">
    <property type="entry name" value="Regulator of G-protein Signalling 4, domain 2"/>
    <property type="match status" value="1"/>
</dbReference>
<dbReference type="InterPro" id="IPR016137">
    <property type="entry name" value="RGS"/>
</dbReference>
<dbReference type="InterPro" id="IPR047016">
    <property type="entry name" value="RGS6/7/9/11"/>
</dbReference>
<dbReference type="InterPro" id="IPR036305">
    <property type="entry name" value="RGS_sf"/>
</dbReference>
<dbReference type="InterPro" id="IPR044926">
    <property type="entry name" value="RGS_subdomain_2"/>
</dbReference>
<dbReference type="PANTHER" id="PTHR45746">
    <property type="entry name" value="LP21163P"/>
    <property type="match status" value="1"/>
</dbReference>
<dbReference type="PANTHER" id="PTHR45746:SF3">
    <property type="entry name" value="REGULATOR OF G-PROTEIN SIGNALING 11"/>
    <property type="match status" value="1"/>
</dbReference>
<dbReference type="Pfam" id="PF00615">
    <property type="entry name" value="RGS"/>
    <property type="match status" value="1"/>
</dbReference>
<dbReference type="PRINTS" id="PR01301">
    <property type="entry name" value="RGSPROTEIN"/>
</dbReference>
<dbReference type="SUPFAM" id="SSF48097">
    <property type="entry name" value="Regulator of G-protein signaling, RGS"/>
    <property type="match status" value="1"/>
</dbReference>
<sequence length="66" mass="7605">EACEELRFGGQAQVPTLVDSVYQQFLAPGAARWINIDSRTMEWTLEGLRQPHRYVLDAAQLHIYML</sequence>
<comment type="function">
    <text>Inhibits signal transduction by increasing the GTPase activity of G protein alpha subunits thereby driving them into their inactive GDP-bound form.</text>
</comment>
<comment type="subunit">
    <text evidence="1">Heterodimer with Gbeta5. Interacts with RGS7BP, leading to regulate the subcellular location of the heterodimer formed with Gbeta5 (By similarity).</text>
</comment>
<feature type="chain" id="PRO_0000204212" description="Regulator of G-protein signaling 11">
    <location>
        <begin position="1" status="less than"/>
        <end position="66" status="greater than"/>
    </location>
</feature>
<feature type="domain" description="RGS" evidence="2">
    <location>
        <begin position="1" status="less than"/>
        <end position="66" status="greater than"/>
    </location>
</feature>
<feature type="non-terminal residue">
    <location>
        <position position="1"/>
    </location>
</feature>
<feature type="non-terminal residue">
    <location>
        <position position="66"/>
    </location>
</feature>
<name>RGS11_RAT</name>
<gene>
    <name type="primary">Rgs11</name>
</gene>
<protein>
    <recommendedName>
        <fullName>Regulator of G-protein signaling 11</fullName>
        <shortName>RGS11</shortName>
    </recommendedName>
</protein>
<evidence type="ECO:0000250" key="1"/>
<evidence type="ECO:0000255" key="2">
    <source>
        <dbReference type="PROSITE-ProRule" id="PRU00171"/>
    </source>
</evidence>
<proteinExistence type="evidence at transcript level"/>
<reference key="1">
    <citation type="journal article" date="1996" name="Cell">
        <title>EGL-10 regulates G protein signaling in the C. elegans nervous system and shares a conserved domain with many mammalian proteins.</title>
        <authorList>
            <person name="Koelle M.R."/>
            <person name="Horvitz H.R."/>
        </authorList>
    </citation>
    <scope>NUCLEOTIDE SEQUENCE [MRNA]</scope>
    <source>
        <tissue>Brain</tissue>
    </source>
</reference>
<organism>
    <name type="scientific">Rattus norvegicus</name>
    <name type="common">Rat</name>
    <dbReference type="NCBI Taxonomy" id="10116"/>
    <lineage>
        <taxon>Eukaryota</taxon>
        <taxon>Metazoa</taxon>
        <taxon>Chordata</taxon>
        <taxon>Craniata</taxon>
        <taxon>Vertebrata</taxon>
        <taxon>Euteleostomi</taxon>
        <taxon>Mammalia</taxon>
        <taxon>Eutheria</taxon>
        <taxon>Euarchontoglires</taxon>
        <taxon>Glires</taxon>
        <taxon>Rodentia</taxon>
        <taxon>Myomorpha</taxon>
        <taxon>Muroidea</taxon>
        <taxon>Muridae</taxon>
        <taxon>Murinae</taxon>
        <taxon>Rattus</taxon>
    </lineage>
</organism>
<accession>P49807</accession>
<keyword id="KW-1185">Reference proteome</keyword>
<keyword id="KW-0734">Signal transduction inhibitor</keyword>